<sequence>MNDDKTERPVKTANQRGAARLAAVQALYQMDVGGTGVLEIVAEYEAHRLGQEIDGATYLKADAGWFRSIVSGVVRDQVRLDPLIAVALQDDWALSRLDSTVRAILRAGVFELLDRKDVPVAVIVTEYVEIARAFFDDDEPKLVNAVLDRIAKQVRGEAKK</sequence>
<reference key="1">
    <citation type="journal article" date="2006" name="Proc. Natl. Acad. Sci. U.S.A.">
        <title>The partitioned Rhizobium etli genome: genetic and metabolic redundancy in seven interacting replicons.</title>
        <authorList>
            <person name="Gonzalez V."/>
            <person name="Santamaria R.I."/>
            <person name="Bustos P."/>
            <person name="Hernandez-Gonzalez I."/>
            <person name="Medrano-Soto A."/>
            <person name="Moreno-Hagelsieb G."/>
            <person name="Janga S.C."/>
            <person name="Ramirez M.A."/>
            <person name="Jimenez-Jacinto V."/>
            <person name="Collado-Vides J."/>
            <person name="Davila G."/>
        </authorList>
    </citation>
    <scope>NUCLEOTIDE SEQUENCE [LARGE SCALE GENOMIC DNA]</scope>
    <source>
        <strain>ATCC 51251 / DSM 11541 / JCM 21823 / NBRC 15573 / CFN 42</strain>
    </source>
</reference>
<proteinExistence type="inferred from homology"/>
<organism>
    <name type="scientific">Rhizobium etli (strain ATCC 51251 / DSM 11541 / JCM 21823 / NBRC 15573 / CFN 42)</name>
    <dbReference type="NCBI Taxonomy" id="347834"/>
    <lineage>
        <taxon>Bacteria</taxon>
        <taxon>Pseudomonadati</taxon>
        <taxon>Pseudomonadota</taxon>
        <taxon>Alphaproteobacteria</taxon>
        <taxon>Hyphomicrobiales</taxon>
        <taxon>Rhizobiaceae</taxon>
        <taxon>Rhizobium/Agrobacterium group</taxon>
        <taxon>Rhizobium</taxon>
    </lineage>
</organism>
<dbReference type="EMBL" id="CP000133">
    <property type="protein sequence ID" value="ABC90329.1"/>
    <property type="molecule type" value="Genomic_DNA"/>
</dbReference>
<dbReference type="RefSeq" id="WP_011424857.1">
    <property type="nucleotide sequence ID" value="NC_007761.1"/>
</dbReference>
<dbReference type="SMR" id="Q2KA07"/>
<dbReference type="KEGG" id="ret:RHE_CH01526"/>
<dbReference type="eggNOG" id="COG0781">
    <property type="taxonomic scope" value="Bacteria"/>
</dbReference>
<dbReference type="HOGENOM" id="CLU_087843_4_0_5"/>
<dbReference type="OrthoDB" id="9797817at2"/>
<dbReference type="Proteomes" id="UP000001936">
    <property type="component" value="Chromosome"/>
</dbReference>
<dbReference type="GO" id="GO:0005829">
    <property type="term" value="C:cytosol"/>
    <property type="evidence" value="ECO:0007669"/>
    <property type="project" value="TreeGrafter"/>
</dbReference>
<dbReference type="GO" id="GO:0003723">
    <property type="term" value="F:RNA binding"/>
    <property type="evidence" value="ECO:0007669"/>
    <property type="project" value="UniProtKB-UniRule"/>
</dbReference>
<dbReference type="GO" id="GO:0006353">
    <property type="term" value="P:DNA-templated transcription termination"/>
    <property type="evidence" value="ECO:0007669"/>
    <property type="project" value="UniProtKB-UniRule"/>
</dbReference>
<dbReference type="GO" id="GO:0031564">
    <property type="term" value="P:transcription antitermination"/>
    <property type="evidence" value="ECO:0007669"/>
    <property type="project" value="UniProtKB-KW"/>
</dbReference>
<dbReference type="Gene3D" id="1.10.940.10">
    <property type="entry name" value="NusB-like"/>
    <property type="match status" value="1"/>
</dbReference>
<dbReference type="HAMAP" id="MF_00073">
    <property type="entry name" value="NusB"/>
    <property type="match status" value="1"/>
</dbReference>
<dbReference type="InterPro" id="IPR035926">
    <property type="entry name" value="NusB-like_sf"/>
</dbReference>
<dbReference type="InterPro" id="IPR011605">
    <property type="entry name" value="NusB_fam"/>
</dbReference>
<dbReference type="InterPro" id="IPR006027">
    <property type="entry name" value="NusB_RsmB_TIM44"/>
</dbReference>
<dbReference type="NCBIfam" id="TIGR01951">
    <property type="entry name" value="nusB"/>
    <property type="match status" value="1"/>
</dbReference>
<dbReference type="PANTHER" id="PTHR11078:SF3">
    <property type="entry name" value="ANTITERMINATION NUSB DOMAIN-CONTAINING PROTEIN"/>
    <property type="match status" value="1"/>
</dbReference>
<dbReference type="PANTHER" id="PTHR11078">
    <property type="entry name" value="N UTILIZATION SUBSTANCE PROTEIN B-RELATED"/>
    <property type="match status" value="1"/>
</dbReference>
<dbReference type="Pfam" id="PF01029">
    <property type="entry name" value="NusB"/>
    <property type="match status" value="1"/>
</dbReference>
<dbReference type="SUPFAM" id="SSF48013">
    <property type="entry name" value="NusB-like"/>
    <property type="match status" value="1"/>
</dbReference>
<evidence type="ECO:0000255" key="1">
    <source>
        <dbReference type="HAMAP-Rule" id="MF_00073"/>
    </source>
</evidence>
<comment type="function">
    <text evidence="1">Involved in transcription antitermination. Required for transcription of ribosomal RNA (rRNA) genes. Binds specifically to the boxA antiterminator sequence of the ribosomal RNA (rrn) operons.</text>
</comment>
<comment type="similarity">
    <text evidence="1">Belongs to the NusB family.</text>
</comment>
<keyword id="KW-1185">Reference proteome</keyword>
<keyword id="KW-0694">RNA-binding</keyword>
<keyword id="KW-0804">Transcription</keyword>
<keyword id="KW-0889">Transcription antitermination</keyword>
<keyword id="KW-0805">Transcription regulation</keyword>
<name>NUSB_RHIEC</name>
<protein>
    <recommendedName>
        <fullName evidence="1">Transcription antitermination protein NusB</fullName>
    </recommendedName>
    <alternativeName>
        <fullName evidence="1">Antitermination factor NusB</fullName>
    </alternativeName>
</protein>
<accession>Q2KA07</accession>
<feature type="chain" id="PRO_0000265571" description="Transcription antitermination protein NusB">
    <location>
        <begin position="1"/>
        <end position="160"/>
    </location>
</feature>
<gene>
    <name evidence="1" type="primary">nusB</name>
    <name type="ordered locus">RHE_CH01526</name>
</gene>